<proteinExistence type="inferred from homology"/>
<protein>
    <recommendedName>
        <fullName evidence="1">UvrABC system protein C</fullName>
        <shortName evidence="1">Protein UvrC</shortName>
    </recommendedName>
    <alternativeName>
        <fullName evidence="1">Excinuclease ABC subunit C</fullName>
    </alternativeName>
</protein>
<keyword id="KW-0963">Cytoplasm</keyword>
<keyword id="KW-0227">DNA damage</keyword>
<keyword id="KW-0228">DNA excision</keyword>
<keyword id="KW-0234">DNA repair</keyword>
<keyword id="KW-0267">Excision nuclease</keyword>
<keyword id="KW-1185">Reference proteome</keyword>
<keyword id="KW-0742">SOS response</keyword>
<feature type="chain" id="PRO_0000227428" description="UvrABC system protein C">
    <location>
        <begin position="1"/>
        <end position="688"/>
    </location>
</feature>
<feature type="domain" description="GIY-YIG" evidence="1">
    <location>
        <begin position="11"/>
        <end position="90"/>
    </location>
</feature>
<feature type="domain" description="UVR" evidence="1">
    <location>
        <begin position="200"/>
        <end position="235"/>
    </location>
</feature>
<organism>
    <name type="scientific">Nitratidesulfovibrio vulgaris (strain ATCC 29579 / DSM 644 / CCUG 34227 / NCIMB 8303 / VKM B-1760 / Hildenborough)</name>
    <name type="common">Desulfovibrio vulgaris</name>
    <dbReference type="NCBI Taxonomy" id="882"/>
    <lineage>
        <taxon>Bacteria</taxon>
        <taxon>Pseudomonadati</taxon>
        <taxon>Thermodesulfobacteriota</taxon>
        <taxon>Desulfovibrionia</taxon>
        <taxon>Desulfovibrionales</taxon>
        <taxon>Desulfovibrionaceae</taxon>
        <taxon>Nitratidesulfovibrio</taxon>
    </lineage>
</organism>
<name>UVRC_NITV2</name>
<evidence type="ECO:0000255" key="1">
    <source>
        <dbReference type="HAMAP-Rule" id="MF_00203"/>
    </source>
</evidence>
<evidence type="ECO:0000305" key="2"/>
<reference key="1">
    <citation type="journal article" date="2004" name="Nat. Biotechnol.">
        <title>The genome sequence of the anaerobic, sulfate-reducing bacterium Desulfovibrio vulgaris Hildenborough.</title>
        <authorList>
            <person name="Heidelberg J.F."/>
            <person name="Seshadri R."/>
            <person name="Haveman S.A."/>
            <person name="Hemme C.L."/>
            <person name="Paulsen I.T."/>
            <person name="Kolonay J.F."/>
            <person name="Eisen J.A."/>
            <person name="Ward N.L."/>
            <person name="Methe B.A."/>
            <person name="Brinkac L.M."/>
            <person name="Daugherty S.C."/>
            <person name="DeBoy R.T."/>
            <person name="Dodson R.J."/>
            <person name="Durkin A.S."/>
            <person name="Madupu R."/>
            <person name="Nelson W.C."/>
            <person name="Sullivan S.A."/>
            <person name="Fouts D.E."/>
            <person name="Haft D.H."/>
            <person name="Selengut J."/>
            <person name="Peterson J.D."/>
            <person name="Davidsen T.M."/>
            <person name="Zafar N."/>
            <person name="Zhou L."/>
            <person name="Radune D."/>
            <person name="Dimitrov G."/>
            <person name="Hance M."/>
            <person name="Tran K."/>
            <person name="Khouri H.M."/>
            <person name="Gill J."/>
            <person name="Utterback T.R."/>
            <person name="Feldblyum T.V."/>
            <person name="Wall J.D."/>
            <person name="Voordouw G."/>
            <person name="Fraser C.M."/>
        </authorList>
    </citation>
    <scope>NUCLEOTIDE SEQUENCE [LARGE SCALE GENOMIC DNA]</scope>
    <source>
        <strain>ATCC 29579 / DSM 644 / CCUG 34227 / NCIMB 8303 / VKM B-1760 / Hildenborough</strain>
    </source>
</reference>
<comment type="function">
    <text evidence="1">The UvrABC repair system catalyzes the recognition and processing of DNA lesions. UvrC both incises the 5' and 3' sides of the lesion. The N-terminal half is responsible for the 3' incision and the C-terminal half is responsible for the 5' incision.</text>
</comment>
<comment type="subunit">
    <text evidence="1">Interacts with UvrB in an incision complex.</text>
</comment>
<comment type="subcellular location">
    <subcellularLocation>
        <location evidence="1">Cytoplasm</location>
    </subcellularLocation>
</comment>
<comment type="similarity">
    <text evidence="1">Belongs to the UvrC family.</text>
</comment>
<comment type="sequence caution" evidence="2">
    <conflict type="erroneous initiation">
        <sequence resource="EMBL-CDS" id="AAS95281"/>
    </conflict>
</comment>
<accession>Q72DX8</accession>
<sequence>MERPDLSTIPLTPGVYLYKDESGRIIYVGKARCLRRRVASYFRDVSALTPKTVAMLRHAVTIDTLSTTTEKEALLLEASLIKKHRPRYNIVLRDDKQYVLFRIGAKHPYPRLEIVRKARRDDGRYFGPFTSASAARETWKTIHRAFPLRRCSDRAFGNRVRACLYHHMGQCLGPCVNEVPSETYAALLEQVSLLLSGRSGELVDALRTEMEAASQGLDFERAAVLRDRIRALERTVERQAAVLPGGGDLDVVGVVEVENGLALGVLFVRQGVLLDGRSFFWPGLGFAEAPELLWSFLGQFYGPQATIPPRIVVPWLPDEDGETGDALDGSSDAVVPVAAATTIDASLADVRTGTEVTSLINASHAAPNVGESTQGDTLAGATGKGATHLMLETALAALRGGIVRIALPRNPAENRLVDMAMSNAREEARRKADTPLQDLLARALHLAGPPHRIEAVDVSHTGGRNTRVGMVVFEDGKPFPEAYRTYAFEDGDGDDYGTLAAWAGRRVESGPPWPDLLLVDGGRGQLAAVVRAFEECGMGAAFAVASIAKARTEEGRADRRAGNVSDRIFLPGRANPLPLRAGAPELLFLQHVRDTVHDYSIGKHRRARAGAALTGELQRVEGIGPATARALWERFDSLQAMADAGVEGLAAVPGVGRARAAALHAHLVTFFGSSKQGGHARTALQRKG</sequence>
<gene>
    <name evidence="1" type="primary">uvrC</name>
    <name type="ordered locus">DVU_0801</name>
</gene>
<dbReference type="EMBL" id="AE017285">
    <property type="protein sequence ID" value="AAS95281.1"/>
    <property type="status" value="ALT_INIT"/>
    <property type="molecule type" value="Genomic_DNA"/>
</dbReference>
<dbReference type="RefSeq" id="WP_014524276.1">
    <property type="nucleotide sequence ID" value="NC_002937.3"/>
</dbReference>
<dbReference type="RefSeq" id="YP_010022.1">
    <property type="nucleotide sequence ID" value="NC_002937.3"/>
</dbReference>
<dbReference type="SMR" id="Q72DX8"/>
<dbReference type="STRING" id="882.DVU_0801"/>
<dbReference type="PaxDb" id="882-DVU_0801"/>
<dbReference type="EnsemblBacteria" id="AAS95281">
    <property type="protein sequence ID" value="AAS95281"/>
    <property type="gene ID" value="DVU_0801"/>
</dbReference>
<dbReference type="KEGG" id="dvu:DVU_0801"/>
<dbReference type="PATRIC" id="fig|882.5.peg.750"/>
<dbReference type="eggNOG" id="COG0322">
    <property type="taxonomic scope" value="Bacteria"/>
</dbReference>
<dbReference type="HOGENOM" id="CLU_014841_3_2_7"/>
<dbReference type="OrthoDB" id="9804933at2"/>
<dbReference type="PhylomeDB" id="Q72DX8"/>
<dbReference type="Proteomes" id="UP000002194">
    <property type="component" value="Chromosome"/>
</dbReference>
<dbReference type="GO" id="GO:0005737">
    <property type="term" value="C:cytoplasm"/>
    <property type="evidence" value="ECO:0007669"/>
    <property type="project" value="UniProtKB-SubCell"/>
</dbReference>
<dbReference type="GO" id="GO:0009380">
    <property type="term" value="C:excinuclease repair complex"/>
    <property type="evidence" value="ECO:0007669"/>
    <property type="project" value="InterPro"/>
</dbReference>
<dbReference type="GO" id="GO:0003677">
    <property type="term" value="F:DNA binding"/>
    <property type="evidence" value="ECO:0007669"/>
    <property type="project" value="UniProtKB-UniRule"/>
</dbReference>
<dbReference type="GO" id="GO:0009381">
    <property type="term" value="F:excinuclease ABC activity"/>
    <property type="evidence" value="ECO:0007669"/>
    <property type="project" value="UniProtKB-UniRule"/>
</dbReference>
<dbReference type="GO" id="GO:0006289">
    <property type="term" value="P:nucleotide-excision repair"/>
    <property type="evidence" value="ECO:0007669"/>
    <property type="project" value="UniProtKB-UniRule"/>
</dbReference>
<dbReference type="GO" id="GO:0009432">
    <property type="term" value="P:SOS response"/>
    <property type="evidence" value="ECO:0007669"/>
    <property type="project" value="UniProtKB-UniRule"/>
</dbReference>
<dbReference type="CDD" id="cd10434">
    <property type="entry name" value="GIY-YIG_UvrC_Cho"/>
    <property type="match status" value="1"/>
</dbReference>
<dbReference type="FunFam" id="3.40.1440.10:FF:000001">
    <property type="entry name" value="UvrABC system protein C"/>
    <property type="match status" value="1"/>
</dbReference>
<dbReference type="Gene3D" id="1.10.150.20">
    <property type="entry name" value="5' to 3' exonuclease, C-terminal subdomain"/>
    <property type="match status" value="1"/>
</dbReference>
<dbReference type="Gene3D" id="3.40.1440.10">
    <property type="entry name" value="GIY-YIG endonuclease"/>
    <property type="match status" value="1"/>
</dbReference>
<dbReference type="Gene3D" id="4.10.860.10">
    <property type="entry name" value="UVR domain"/>
    <property type="match status" value="1"/>
</dbReference>
<dbReference type="Gene3D" id="3.30.420.340">
    <property type="entry name" value="UvrC, RNAse H endonuclease domain"/>
    <property type="match status" value="1"/>
</dbReference>
<dbReference type="HAMAP" id="MF_00203">
    <property type="entry name" value="UvrC"/>
    <property type="match status" value="1"/>
</dbReference>
<dbReference type="InterPro" id="IPR000305">
    <property type="entry name" value="GIY-YIG_endonuc"/>
</dbReference>
<dbReference type="InterPro" id="IPR035901">
    <property type="entry name" value="GIY-YIG_endonuc_sf"/>
</dbReference>
<dbReference type="InterPro" id="IPR047296">
    <property type="entry name" value="GIY-YIG_UvrC_Cho"/>
</dbReference>
<dbReference type="InterPro" id="IPR003583">
    <property type="entry name" value="Hlx-hairpin-Hlx_DNA-bd_motif"/>
</dbReference>
<dbReference type="InterPro" id="IPR010994">
    <property type="entry name" value="RuvA_2-like"/>
</dbReference>
<dbReference type="InterPro" id="IPR001943">
    <property type="entry name" value="UVR_dom"/>
</dbReference>
<dbReference type="InterPro" id="IPR036876">
    <property type="entry name" value="UVR_dom_sf"/>
</dbReference>
<dbReference type="InterPro" id="IPR050066">
    <property type="entry name" value="UvrABC_protein_C"/>
</dbReference>
<dbReference type="InterPro" id="IPR004791">
    <property type="entry name" value="UvrC"/>
</dbReference>
<dbReference type="InterPro" id="IPR001162">
    <property type="entry name" value="UvrC_RNase_H_dom"/>
</dbReference>
<dbReference type="InterPro" id="IPR038476">
    <property type="entry name" value="UvrC_RNase_H_dom_sf"/>
</dbReference>
<dbReference type="NCBIfam" id="NF011260">
    <property type="entry name" value="PRK14666.1"/>
    <property type="match status" value="1"/>
</dbReference>
<dbReference type="NCBIfam" id="TIGR00194">
    <property type="entry name" value="uvrC"/>
    <property type="match status" value="1"/>
</dbReference>
<dbReference type="PANTHER" id="PTHR30562:SF1">
    <property type="entry name" value="UVRABC SYSTEM PROTEIN C"/>
    <property type="match status" value="1"/>
</dbReference>
<dbReference type="PANTHER" id="PTHR30562">
    <property type="entry name" value="UVRC/OXIDOREDUCTASE"/>
    <property type="match status" value="1"/>
</dbReference>
<dbReference type="Pfam" id="PF01541">
    <property type="entry name" value="GIY-YIG"/>
    <property type="match status" value="1"/>
</dbReference>
<dbReference type="Pfam" id="PF14520">
    <property type="entry name" value="HHH_5"/>
    <property type="match status" value="1"/>
</dbReference>
<dbReference type="Pfam" id="PF02151">
    <property type="entry name" value="UVR"/>
    <property type="match status" value="1"/>
</dbReference>
<dbReference type="Pfam" id="PF22920">
    <property type="entry name" value="UvrC_RNaseH"/>
    <property type="match status" value="1"/>
</dbReference>
<dbReference type="Pfam" id="PF08459">
    <property type="entry name" value="UvrC_RNaseH_dom"/>
    <property type="match status" value="1"/>
</dbReference>
<dbReference type="SMART" id="SM00465">
    <property type="entry name" value="GIYc"/>
    <property type="match status" value="1"/>
</dbReference>
<dbReference type="SMART" id="SM00278">
    <property type="entry name" value="HhH1"/>
    <property type="match status" value="2"/>
</dbReference>
<dbReference type="SUPFAM" id="SSF46600">
    <property type="entry name" value="C-terminal UvrC-binding domain of UvrB"/>
    <property type="match status" value="1"/>
</dbReference>
<dbReference type="SUPFAM" id="SSF82771">
    <property type="entry name" value="GIY-YIG endonuclease"/>
    <property type="match status" value="1"/>
</dbReference>
<dbReference type="SUPFAM" id="SSF47781">
    <property type="entry name" value="RuvA domain 2-like"/>
    <property type="match status" value="1"/>
</dbReference>
<dbReference type="PROSITE" id="PS50164">
    <property type="entry name" value="GIY_YIG"/>
    <property type="match status" value="1"/>
</dbReference>
<dbReference type="PROSITE" id="PS50151">
    <property type="entry name" value="UVR"/>
    <property type="match status" value="1"/>
</dbReference>
<dbReference type="PROSITE" id="PS50165">
    <property type="entry name" value="UVRC"/>
    <property type="match status" value="1"/>
</dbReference>